<evidence type="ECO:0000255" key="1">
    <source>
        <dbReference type="HAMAP-Rule" id="MF_01038"/>
    </source>
</evidence>
<name>GPMI_CLOPE</name>
<sequence length="512" mass="56614">MSKKPVMLMILDGFGISPNKEGNAVAAANKPNYDRLFNKYPHTELQASGLEVGLPEGQMGNSEVGHLNIGAGRIIYQELTRITKEIKEGTFFTNKALVKAMDEAKENNTSLHLMGLLSNGGVHSHIDHLKGLLELAKKKGLQKVYVHAFMDGRDVAPSSGKDFIVELENAMKEIGVGEIATISGRYYAMDRDNRWERVELAYNAMALGEGEKASSAVEAIEKSYHDNKTDEFVLPTVIEEDGHPVARIKDGDSVIFFNFRPDRAREITRAIVDPEFKGFERKQLHVNFVCMTQYDKTLECVDVAYRPESYTNTLGEYVASKGLNQLRIAETEKYAHVTFFFNGGVEQPNTNEDRALIASPKVATYDLKPEMSAYEVTDELINRLDQDKYDMIILNFANPDMVGHTGVQEAAVKAIEAVDECLGKVADKVLEKEGTLFITADHGNAEVMIDYSTGKPMTAHTSDPVPFLWVSKDAEGKSLKDGGKLADIAPTMLTVMGLEVPSEMTGTCLLNK</sequence>
<organism>
    <name type="scientific">Clostridium perfringens (strain 13 / Type A)</name>
    <dbReference type="NCBI Taxonomy" id="195102"/>
    <lineage>
        <taxon>Bacteria</taxon>
        <taxon>Bacillati</taxon>
        <taxon>Bacillota</taxon>
        <taxon>Clostridia</taxon>
        <taxon>Eubacteriales</taxon>
        <taxon>Clostridiaceae</taxon>
        <taxon>Clostridium</taxon>
    </lineage>
</organism>
<keyword id="KW-0324">Glycolysis</keyword>
<keyword id="KW-0413">Isomerase</keyword>
<keyword id="KW-0464">Manganese</keyword>
<keyword id="KW-0479">Metal-binding</keyword>
<keyword id="KW-1185">Reference proteome</keyword>
<accession>Q8XKU2</accession>
<gene>
    <name evidence="1" type="primary">gpmI</name>
    <name type="synonym">pgm</name>
    <name type="ordered locus">CPE1301</name>
</gene>
<protein>
    <recommendedName>
        <fullName evidence="1">2,3-bisphosphoglycerate-independent phosphoglycerate mutase</fullName>
        <shortName evidence="1">BPG-independent PGAM</shortName>
        <shortName evidence="1">Phosphoglyceromutase</shortName>
        <shortName evidence="1">iPGM</shortName>
        <ecNumber evidence="1">5.4.2.12</ecNumber>
    </recommendedName>
</protein>
<feature type="chain" id="PRO_0000212137" description="2,3-bisphosphoglycerate-independent phosphoglycerate mutase">
    <location>
        <begin position="1"/>
        <end position="512"/>
    </location>
</feature>
<feature type="active site" description="Phosphoserine intermediate" evidence="1">
    <location>
        <position position="62"/>
    </location>
</feature>
<feature type="binding site" evidence="1">
    <location>
        <position position="12"/>
    </location>
    <ligand>
        <name>Mn(2+)</name>
        <dbReference type="ChEBI" id="CHEBI:29035"/>
        <label>2</label>
    </ligand>
</feature>
<feature type="binding site" evidence="1">
    <location>
        <position position="62"/>
    </location>
    <ligand>
        <name>Mn(2+)</name>
        <dbReference type="ChEBI" id="CHEBI:29035"/>
        <label>2</label>
    </ligand>
</feature>
<feature type="binding site" evidence="1">
    <location>
        <position position="123"/>
    </location>
    <ligand>
        <name>substrate</name>
    </ligand>
</feature>
<feature type="binding site" evidence="1">
    <location>
        <begin position="153"/>
        <end position="154"/>
    </location>
    <ligand>
        <name>substrate</name>
    </ligand>
</feature>
<feature type="binding site" evidence="1">
    <location>
        <position position="185"/>
    </location>
    <ligand>
        <name>substrate</name>
    </ligand>
</feature>
<feature type="binding site" evidence="1">
    <location>
        <position position="191"/>
    </location>
    <ligand>
        <name>substrate</name>
    </ligand>
</feature>
<feature type="binding site" evidence="1">
    <location>
        <begin position="260"/>
        <end position="263"/>
    </location>
    <ligand>
        <name>substrate</name>
    </ligand>
</feature>
<feature type="binding site" evidence="1">
    <location>
        <position position="333"/>
    </location>
    <ligand>
        <name>substrate</name>
    </ligand>
</feature>
<feature type="binding site" evidence="1">
    <location>
        <position position="400"/>
    </location>
    <ligand>
        <name>Mn(2+)</name>
        <dbReference type="ChEBI" id="CHEBI:29035"/>
        <label>1</label>
    </ligand>
</feature>
<feature type="binding site" evidence="1">
    <location>
        <position position="404"/>
    </location>
    <ligand>
        <name>Mn(2+)</name>
        <dbReference type="ChEBI" id="CHEBI:29035"/>
        <label>1</label>
    </ligand>
</feature>
<feature type="binding site" evidence="1">
    <location>
        <position position="441"/>
    </location>
    <ligand>
        <name>Mn(2+)</name>
        <dbReference type="ChEBI" id="CHEBI:29035"/>
        <label>2</label>
    </ligand>
</feature>
<feature type="binding site" evidence="1">
    <location>
        <position position="442"/>
    </location>
    <ligand>
        <name>Mn(2+)</name>
        <dbReference type="ChEBI" id="CHEBI:29035"/>
        <label>2</label>
    </ligand>
</feature>
<feature type="binding site" evidence="1">
    <location>
        <position position="460"/>
    </location>
    <ligand>
        <name>Mn(2+)</name>
        <dbReference type="ChEBI" id="CHEBI:29035"/>
        <label>1</label>
    </ligand>
</feature>
<reference key="1">
    <citation type="journal article" date="2002" name="Proc. Natl. Acad. Sci. U.S.A.">
        <title>Complete genome sequence of Clostridium perfringens, an anaerobic flesh-eater.</title>
        <authorList>
            <person name="Shimizu T."/>
            <person name="Ohtani K."/>
            <person name="Hirakawa H."/>
            <person name="Ohshima K."/>
            <person name="Yamashita A."/>
            <person name="Shiba T."/>
            <person name="Ogasawara N."/>
            <person name="Hattori M."/>
            <person name="Kuhara S."/>
            <person name="Hayashi H."/>
        </authorList>
    </citation>
    <scope>NUCLEOTIDE SEQUENCE [LARGE SCALE GENOMIC DNA]</scope>
    <source>
        <strain>13 / Type A</strain>
    </source>
</reference>
<comment type="function">
    <text evidence="1">Catalyzes the interconversion of 2-phosphoglycerate and 3-phosphoglycerate.</text>
</comment>
<comment type="catalytic activity">
    <reaction evidence="1">
        <text>(2R)-2-phosphoglycerate = (2R)-3-phosphoglycerate</text>
        <dbReference type="Rhea" id="RHEA:15901"/>
        <dbReference type="ChEBI" id="CHEBI:58272"/>
        <dbReference type="ChEBI" id="CHEBI:58289"/>
        <dbReference type="EC" id="5.4.2.12"/>
    </reaction>
</comment>
<comment type="cofactor">
    <cofactor evidence="1">
        <name>Mn(2+)</name>
        <dbReference type="ChEBI" id="CHEBI:29035"/>
    </cofactor>
    <text evidence="1">Binds 2 manganese ions per subunit.</text>
</comment>
<comment type="pathway">
    <text evidence="1">Carbohydrate degradation; glycolysis; pyruvate from D-glyceraldehyde 3-phosphate: step 3/5.</text>
</comment>
<comment type="subunit">
    <text evidence="1">Monomer.</text>
</comment>
<comment type="similarity">
    <text evidence="1">Belongs to the BPG-independent phosphoglycerate mutase family.</text>
</comment>
<dbReference type="EC" id="5.4.2.12" evidence="1"/>
<dbReference type="EMBL" id="BA000016">
    <property type="protein sequence ID" value="BAB81007.1"/>
    <property type="molecule type" value="Genomic_DNA"/>
</dbReference>
<dbReference type="RefSeq" id="WP_011010376.1">
    <property type="nucleotide sequence ID" value="NC_003366.1"/>
</dbReference>
<dbReference type="SMR" id="Q8XKU2"/>
<dbReference type="STRING" id="195102.gene:10490564"/>
<dbReference type="KEGG" id="cpe:CPE1301"/>
<dbReference type="HOGENOM" id="CLU_026099_2_0_9"/>
<dbReference type="UniPathway" id="UPA00109">
    <property type="reaction ID" value="UER00186"/>
</dbReference>
<dbReference type="Proteomes" id="UP000000818">
    <property type="component" value="Chromosome"/>
</dbReference>
<dbReference type="GO" id="GO:0005829">
    <property type="term" value="C:cytosol"/>
    <property type="evidence" value="ECO:0007669"/>
    <property type="project" value="TreeGrafter"/>
</dbReference>
<dbReference type="GO" id="GO:0030145">
    <property type="term" value="F:manganese ion binding"/>
    <property type="evidence" value="ECO:0007669"/>
    <property type="project" value="UniProtKB-UniRule"/>
</dbReference>
<dbReference type="GO" id="GO:0004619">
    <property type="term" value="F:phosphoglycerate mutase activity"/>
    <property type="evidence" value="ECO:0007669"/>
    <property type="project" value="UniProtKB-EC"/>
</dbReference>
<dbReference type="GO" id="GO:0006007">
    <property type="term" value="P:glucose catabolic process"/>
    <property type="evidence" value="ECO:0007669"/>
    <property type="project" value="InterPro"/>
</dbReference>
<dbReference type="GO" id="GO:0006096">
    <property type="term" value="P:glycolytic process"/>
    <property type="evidence" value="ECO:0007669"/>
    <property type="project" value="UniProtKB-UniRule"/>
</dbReference>
<dbReference type="CDD" id="cd16010">
    <property type="entry name" value="iPGM"/>
    <property type="match status" value="1"/>
</dbReference>
<dbReference type="FunFam" id="3.40.1450.10:FF:000001">
    <property type="entry name" value="2,3-bisphosphoglycerate-independent phosphoglycerate mutase"/>
    <property type="match status" value="1"/>
</dbReference>
<dbReference type="FunFam" id="3.40.720.10:FF:000001">
    <property type="entry name" value="2,3-bisphosphoglycerate-independent phosphoglycerate mutase"/>
    <property type="match status" value="1"/>
</dbReference>
<dbReference type="Gene3D" id="3.40.720.10">
    <property type="entry name" value="Alkaline Phosphatase, subunit A"/>
    <property type="match status" value="1"/>
</dbReference>
<dbReference type="Gene3D" id="3.40.1450.10">
    <property type="entry name" value="BPG-independent phosphoglycerate mutase, domain B"/>
    <property type="match status" value="1"/>
</dbReference>
<dbReference type="HAMAP" id="MF_01038">
    <property type="entry name" value="GpmI"/>
    <property type="match status" value="1"/>
</dbReference>
<dbReference type="InterPro" id="IPR017850">
    <property type="entry name" value="Alkaline_phosphatase_core_sf"/>
</dbReference>
<dbReference type="InterPro" id="IPR011258">
    <property type="entry name" value="BPG-indep_PGM_N"/>
</dbReference>
<dbReference type="InterPro" id="IPR006124">
    <property type="entry name" value="Metalloenzyme"/>
</dbReference>
<dbReference type="InterPro" id="IPR036646">
    <property type="entry name" value="PGAM_B_sf"/>
</dbReference>
<dbReference type="InterPro" id="IPR005995">
    <property type="entry name" value="Pgm_bpd_ind"/>
</dbReference>
<dbReference type="NCBIfam" id="TIGR01307">
    <property type="entry name" value="pgm_bpd_ind"/>
    <property type="match status" value="1"/>
</dbReference>
<dbReference type="PANTHER" id="PTHR31637">
    <property type="entry name" value="2,3-BISPHOSPHOGLYCERATE-INDEPENDENT PHOSPHOGLYCERATE MUTASE"/>
    <property type="match status" value="1"/>
</dbReference>
<dbReference type="PANTHER" id="PTHR31637:SF0">
    <property type="entry name" value="2,3-BISPHOSPHOGLYCERATE-INDEPENDENT PHOSPHOGLYCERATE MUTASE"/>
    <property type="match status" value="1"/>
</dbReference>
<dbReference type="Pfam" id="PF06415">
    <property type="entry name" value="iPGM_N"/>
    <property type="match status" value="1"/>
</dbReference>
<dbReference type="Pfam" id="PF01676">
    <property type="entry name" value="Metalloenzyme"/>
    <property type="match status" value="1"/>
</dbReference>
<dbReference type="PIRSF" id="PIRSF001492">
    <property type="entry name" value="IPGAM"/>
    <property type="match status" value="1"/>
</dbReference>
<dbReference type="SUPFAM" id="SSF64158">
    <property type="entry name" value="2,3-Bisphosphoglycerate-independent phosphoglycerate mutase, substrate-binding domain"/>
    <property type="match status" value="1"/>
</dbReference>
<dbReference type="SUPFAM" id="SSF53649">
    <property type="entry name" value="Alkaline phosphatase-like"/>
    <property type="match status" value="1"/>
</dbReference>
<proteinExistence type="inferred from homology"/>